<evidence type="ECO:0000255" key="1">
    <source>
        <dbReference type="HAMAP-Rule" id="MF_00028"/>
    </source>
</evidence>
<evidence type="ECO:0000305" key="2"/>
<reference key="1">
    <citation type="journal article" date="2004" name="Proc. Natl. Acad. Sci. U.S.A.">
        <title>Structural flexibility in the Burkholderia mallei genome.</title>
        <authorList>
            <person name="Nierman W.C."/>
            <person name="DeShazer D."/>
            <person name="Kim H.S."/>
            <person name="Tettelin H."/>
            <person name="Nelson K.E."/>
            <person name="Feldblyum T.V."/>
            <person name="Ulrich R.L."/>
            <person name="Ronning C.M."/>
            <person name="Brinkac L.M."/>
            <person name="Daugherty S.C."/>
            <person name="Davidsen T.D."/>
            <person name="DeBoy R.T."/>
            <person name="Dimitrov G."/>
            <person name="Dodson R.J."/>
            <person name="Durkin A.S."/>
            <person name="Gwinn M.L."/>
            <person name="Haft D.H."/>
            <person name="Khouri H.M."/>
            <person name="Kolonay J.F."/>
            <person name="Madupu R."/>
            <person name="Mohammoud Y."/>
            <person name="Nelson W.C."/>
            <person name="Radune D."/>
            <person name="Romero C.M."/>
            <person name="Sarria S."/>
            <person name="Selengut J."/>
            <person name="Shamblin C."/>
            <person name="Sullivan S.A."/>
            <person name="White O."/>
            <person name="Yu Y."/>
            <person name="Zafar N."/>
            <person name="Zhou L."/>
            <person name="Fraser C.M."/>
        </authorList>
    </citation>
    <scope>NUCLEOTIDE SEQUENCE [LARGE SCALE GENOMIC DNA]</scope>
    <source>
        <strain>ATCC 23344</strain>
    </source>
</reference>
<comment type="function">
    <text evidence="1">Catalyzes amidations at positions B, D, E, and G on adenosylcobyrinic A,C-diamide. NH(2) groups are provided by glutamine, and one molecule of ATP is hydrogenolyzed for each amidation.</text>
</comment>
<comment type="pathway">
    <text evidence="1">Cofactor biosynthesis; adenosylcobalamin biosynthesis.</text>
</comment>
<comment type="similarity">
    <text evidence="1">Belongs to the CobB/CobQ family. CobQ subfamily.</text>
</comment>
<comment type="sequence caution" evidence="2">
    <conflict type="erroneous initiation">
        <sequence resource="EMBL-CDS" id="AAU49246"/>
    </conflict>
</comment>
<feature type="chain" id="PRO_0000141292" description="Cobyric acid synthase">
    <location>
        <begin position="1"/>
        <end position="486"/>
    </location>
</feature>
<feature type="domain" description="GATase cobBQ-type" evidence="1">
    <location>
        <begin position="248"/>
        <end position="439"/>
    </location>
</feature>
<feature type="active site" description="Nucleophile" evidence="1">
    <location>
        <position position="328"/>
    </location>
</feature>
<feature type="active site" evidence="1">
    <location>
        <position position="431"/>
    </location>
</feature>
<keyword id="KW-0169">Cobalamin biosynthesis</keyword>
<keyword id="KW-0315">Glutamine amidotransferase</keyword>
<keyword id="KW-1185">Reference proteome</keyword>
<sequence>MIQGTTSDAGKSTLVAGLCRLARRTGARVAPFKPQNMALNSAVTANGGEIGRAQALQALAAGIEAHTDLNPVLLKPTGDRGAQVIIHGTARANLDARAYHDYKPTAMRAVLESYGRLRGAYDAVIVEGAGSPAEINLREGDIANMGFAEAVDCPVVLVADIDRGGVFAHLVGTLACLSDSERARVRGFVINRFRGDPALLEPGLRWLEARTGKPVLGVLPYLHGLTLDAEDMLPASARTSAARRDAGVLRIVVPALPRISNHTDFDALRAHPRVDFTYWKRGPVPDADLLILPGSKNVLADLAWLRDAGWDALIKRHLRYGGKVIGICGGMQMLGRTLADPHGVEGAAGATSAGLGLLDYATTLTPEKTLVNAAGRLAFGGDARVAGYEIHMGRTEGPALASPALMLAGRGGERPDGAVSADGQILATYLHGLFDTPHACAALLEWAGLDGAEALDYPALREASLERLADTFAEHLDLDRVFAAFA</sequence>
<name>COBQ_BURMA</name>
<proteinExistence type="inferred from homology"/>
<organism>
    <name type="scientific">Burkholderia mallei (strain ATCC 23344)</name>
    <dbReference type="NCBI Taxonomy" id="243160"/>
    <lineage>
        <taxon>Bacteria</taxon>
        <taxon>Pseudomonadati</taxon>
        <taxon>Pseudomonadota</taxon>
        <taxon>Betaproteobacteria</taxon>
        <taxon>Burkholderiales</taxon>
        <taxon>Burkholderiaceae</taxon>
        <taxon>Burkholderia</taxon>
        <taxon>pseudomallei group</taxon>
    </lineage>
</organism>
<accession>Q62LF1</accession>
<gene>
    <name evidence="1" type="primary">cobQ</name>
    <name type="ordered locus">BMA0697</name>
</gene>
<dbReference type="EMBL" id="CP000010">
    <property type="protein sequence ID" value="AAU49246.1"/>
    <property type="status" value="ALT_INIT"/>
    <property type="molecule type" value="Genomic_DNA"/>
</dbReference>
<dbReference type="RefSeq" id="YP_102468.1">
    <property type="nucleotide sequence ID" value="NC_006348.1"/>
</dbReference>
<dbReference type="SMR" id="Q62LF1"/>
<dbReference type="KEGG" id="bma:BMA0697"/>
<dbReference type="PATRIC" id="fig|243160.12.peg.718"/>
<dbReference type="eggNOG" id="COG1492">
    <property type="taxonomic scope" value="Bacteria"/>
</dbReference>
<dbReference type="HOGENOM" id="CLU_019250_2_2_4"/>
<dbReference type="UniPathway" id="UPA00148"/>
<dbReference type="Proteomes" id="UP000006693">
    <property type="component" value="Chromosome 1"/>
</dbReference>
<dbReference type="GO" id="GO:0015420">
    <property type="term" value="F:ABC-type vitamin B12 transporter activity"/>
    <property type="evidence" value="ECO:0007669"/>
    <property type="project" value="UniProtKB-UniRule"/>
</dbReference>
<dbReference type="GO" id="GO:0003824">
    <property type="term" value="F:catalytic activity"/>
    <property type="evidence" value="ECO:0007669"/>
    <property type="project" value="InterPro"/>
</dbReference>
<dbReference type="GO" id="GO:0009236">
    <property type="term" value="P:cobalamin biosynthetic process"/>
    <property type="evidence" value="ECO:0007669"/>
    <property type="project" value="UniProtKB-UniRule"/>
</dbReference>
<dbReference type="CDD" id="cd05389">
    <property type="entry name" value="CobQ_N"/>
    <property type="match status" value="1"/>
</dbReference>
<dbReference type="CDD" id="cd01750">
    <property type="entry name" value="GATase1_CobQ"/>
    <property type="match status" value="1"/>
</dbReference>
<dbReference type="Gene3D" id="3.40.50.880">
    <property type="match status" value="1"/>
</dbReference>
<dbReference type="Gene3D" id="3.40.50.300">
    <property type="entry name" value="P-loop containing nucleotide triphosphate hydrolases"/>
    <property type="match status" value="1"/>
</dbReference>
<dbReference type="HAMAP" id="MF_00028">
    <property type="entry name" value="CobQ"/>
    <property type="match status" value="1"/>
</dbReference>
<dbReference type="InterPro" id="IPR029062">
    <property type="entry name" value="Class_I_gatase-like"/>
</dbReference>
<dbReference type="InterPro" id="IPR002586">
    <property type="entry name" value="CobQ/CobB/MinD/ParA_Nub-bd_dom"/>
</dbReference>
<dbReference type="InterPro" id="IPR033949">
    <property type="entry name" value="CobQ_GATase1"/>
</dbReference>
<dbReference type="InterPro" id="IPR047045">
    <property type="entry name" value="CobQ_N"/>
</dbReference>
<dbReference type="InterPro" id="IPR004459">
    <property type="entry name" value="CobQ_synth"/>
</dbReference>
<dbReference type="InterPro" id="IPR011698">
    <property type="entry name" value="GATase_3"/>
</dbReference>
<dbReference type="InterPro" id="IPR027417">
    <property type="entry name" value="P-loop_NTPase"/>
</dbReference>
<dbReference type="NCBIfam" id="TIGR00313">
    <property type="entry name" value="cobQ"/>
    <property type="match status" value="1"/>
</dbReference>
<dbReference type="NCBIfam" id="NF001989">
    <property type="entry name" value="PRK00784.1"/>
    <property type="match status" value="1"/>
</dbReference>
<dbReference type="PANTHER" id="PTHR21343:SF1">
    <property type="entry name" value="COBYRIC ACID SYNTHASE"/>
    <property type="match status" value="1"/>
</dbReference>
<dbReference type="PANTHER" id="PTHR21343">
    <property type="entry name" value="DETHIOBIOTIN SYNTHETASE"/>
    <property type="match status" value="1"/>
</dbReference>
<dbReference type="Pfam" id="PF01656">
    <property type="entry name" value="CbiA"/>
    <property type="match status" value="1"/>
</dbReference>
<dbReference type="Pfam" id="PF07685">
    <property type="entry name" value="GATase_3"/>
    <property type="match status" value="1"/>
</dbReference>
<dbReference type="SUPFAM" id="SSF52317">
    <property type="entry name" value="Class I glutamine amidotransferase-like"/>
    <property type="match status" value="1"/>
</dbReference>
<dbReference type="SUPFAM" id="SSF52540">
    <property type="entry name" value="P-loop containing nucleoside triphosphate hydrolases"/>
    <property type="match status" value="1"/>
</dbReference>
<dbReference type="PROSITE" id="PS51274">
    <property type="entry name" value="GATASE_COBBQ"/>
    <property type="match status" value="1"/>
</dbReference>
<protein>
    <recommendedName>
        <fullName evidence="1">Cobyric acid synthase</fullName>
    </recommendedName>
</protein>